<protein>
    <recommendedName>
        <fullName evidence="1">Photosystem II reaction center protein M</fullName>
        <shortName evidence="1">PSII-M</shortName>
    </recommendedName>
</protein>
<reference key="1">
    <citation type="journal article" date="2001" name="DNA Res.">
        <title>Complete genomic sequence of the filamentous nitrogen-fixing cyanobacterium Anabaena sp. strain PCC 7120.</title>
        <authorList>
            <person name="Kaneko T."/>
            <person name="Nakamura Y."/>
            <person name="Wolk C.P."/>
            <person name="Kuritz T."/>
            <person name="Sasamoto S."/>
            <person name="Watanabe A."/>
            <person name="Iriguchi M."/>
            <person name="Ishikawa A."/>
            <person name="Kawashima K."/>
            <person name="Kimura T."/>
            <person name="Kishida Y."/>
            <person name="Kohara M."/>
            <person name="Matsumoto M."/>
            <person name="Matsuno A."/>
            <person name="Muraki A."/>
            <person name="Nakazaki N."/>
            <person name="Shimpo S."/>
            <person name="Sugimoto M."/>
            <person name="Takazawa M."/>
            <person name="Yamada M."/>
            <person name="Yasuda M."/>
            <person name="Tabata S."/>
        </authorList>
    </citation>
    <scope>NUCLEOTIDE SEQUENCE [LARGE SCALE GENOMIC DNA]</scope>
    <source>
        <strain>PCC 7120 / SAG 25.82 / UTEX 2576</strain>
    </source>
</reference>
<proteinExistence type="inferred from homology"/>
<organism>
    <name type="scientific">Nostoc sp. (strain PCC 7120 / SAG 25.82 / UTEX 2576)</name>
    <dbReference type="NCBI Taxonomy" id="103690"/>
    <lineage>
        <taxon>Bacteria</taxon>
        <taxon>Bacillati</taxon>
        <taxon>Cyanobacteriota</taxon>
        <taxon>Cyanophyceae</taxon>
        <taxon>Nostocales</taxon>
        <taxon>Nostocaceae</taxon>
        <taxon>Nostoc</taxon>
    </lineage>
</organism>
<name>PSBM_NOSS1</name>
<evidence type="ECO:0000255" key="1">
    <source>
        <dbReference type="HAMAP-Rule" id="MF_00438"/>
    </source>
</evidence>
<keyword id="KW-0472">Membrane</keyword>
<keyword id="KW-0602">Photosynthesis</keyword>
<keyword id="KW-0604">Photosystem II</keyword>
<keyword id="KW-0674">Reaction center</keyword>
<keyword id="KW-1185">Reference proteome</keyword>
<keyword id="KW-0793">Thylakoid</keyword>
<keyword id="KW-0812">Transmembrane</keyword>
<keyword id="KW-1133">Transmembrane helix</keyword>
<feature type="chain" id="PRO_0000217581" description="Photosystem II reaction center protein M">
    <location>
        <begin position="1"/>
        <end position="38"/>
    </location>
</feature>
<feature type="transmembrane region" description="Helical" evidence="1">
    <location>
        <begin position="7"/>
        <end position="27"/>
    </location>
</feature>
<dbReference type="EMBL" id="BA000019">
    <property type="protein sequence ID" value="BAB72840.1"/>
    <property type="molecule type" value="Genomic_DNA"/>
</dbReference>
<dbReference type="PIR" id="AH1916">
    <property type="entry name" value="AH1916"/>
</dbReference>
<dbReference type="RefSeq" id="WP_010995057.1">
    <property type="nucleotide sequence ID" value="NZ_RSCN01000006.1"/>
</dbReference>
<dbReference type="SMR" id="Q8YYG7"/>
<dbReference type="STRING" id="103690.gene:10492896"/>
<dbReference type="GeneID" id="58722058"/>
<dbReference type="KEGG" id="ana:asl0883"/>
<dbReference type="eggNOG" id="ENOG50339PB">
    <property type="taxonomic scope" value="Bacteria"/>
</dbReference>
<dbReference type="OrthoDB" id="532820at2"/>
<dbReference type="Proteomes" id="UP000002483">
    <property type="component" value="Chromosome"/>
</dbReference>
<dbReference type="GO" id="GO:0009523">
    <property type="term" value="C:photosystem II"/>
    <property type="evidence" value="ECO:0007669"/>
    <property type="project" value="UniProtKB-KW"/>
</dbReference>
<dbReference type="GO" id="GO:0031676">
    <property type="term" value="C:plasma membrane-derived thylakoid membrane"/>
    <property type="evidence" value="ECO:0007669"/>
    <property type="project" value="UniProtKB-SubCell"/>
</dbReference>
<dbReference type="GO" id="GO:0019684">
    <property type="term" value="P:photosynthesis, light reaction"/>
    <property type="evidence" value="ECO:0007669"/>
    <property type="project" value="InterPro"/>
</dbReference>
<dbReference type="HAMAP" id="MF_00438">
    <property type="entry name" value="PSII_PsbM"/>
    <property type="match status" value="1"/>
</dbReference>
<dbReference type="InterPro" id="IPR007826">
    <property type="entry name" value="PSII_PsbM"/>
</dbReference>
<dbReference type="InterPro" id="IPR037269">
    <property type="entry name" value="PSII_PsbM_sf"/>
</dbReference>
<dbReference type="NCBIfam" id="TIGR03038">
    <property type="entry name" value="PS_II_psbM"/>
    <property type="match status" value="1"/>
</dbReference>
<dbReference type="Pfam" id="PF05151">
    <property type="entry name" value="PsbM"/>
    <property type="match status" value="1"/>
</dbReference>
<dbReference type="SUPFAM" id="SSF161033">
    <property type="entry name" value="Photosystem II reaction center protein M, PsbM"/>
    <property type="match status" value="1"/>
</dbReference>
<gene>
    <name evidence="1" type="primary">psbM</name>
    <name type="ordered locus">asl0883</name>
</gene>
<accession>Q8YYG7</accession>
<comment type="function">
    <text evidence="1">One of the components of the core complex of photosystem II (PSII). PSII is a light-driven water:plastoquinone oxidoreductase that uses light energy to abstract electrons from H(2)O, generating O(2) and a proton gradient subsequently used for ATP formation. It consists of a core antenna complex that captures photons, and an electron transfer chain that converts photonic excitation into a charge separation. This subunit is found at the monomer-monomer interface.</text>
</comment>
<comment type="subunit">
    <text evidence="1">PSII is composed of 1 copy each of membrane proteins PsbA, PsbB, PsbC, PsbD, PsbE, PsbF, PsbH, PsbI, PsbJ, PsbK, PsbL, PsbM, PsbT, PsbX, PsbY, PsbZ, Psb30/Ycf12, peripheral proteins PsbO, CyanoQ (PsbQ), PsbU, PsbV and a large number of cofactors. It forms dimeric complexes.</text>
</comment>
<comment type="subcellular location">
    <subcellularLocation>
        <location evidence="1">Cellular thylakoid membrane</location>
        <topology evidence="1">Single-pass membrane protein</topology>
    </subcellularLocation>
</comment>
<comment type="similarity">
    <text evidence="1">Belongs to the PsbM family.</text>
</comment>
<sequence>MQVNDLGFVASILFVLVPSVFLIILYIQTASREGKKDS</sequence>